<name>IOLR_BACSU</name>
<accession>P46337</accession>
<organism>
    <name type="scientific">Bacillus subtilis (strain 168)</name>
    <dbReference type="NCBI Taxonomy" id="224308"/>
    <lineage>
        <taxon>Bacteria</taxon>
        <taxon>Bacillati</taxon>
        <taxon>Bacillota</taxon>
        <taxon>Bacilli</taxon>
        <taxon>Bacillales</taxon>
        <taxon>Bacillaceae</taxon>
        <taxon>Bacillus</taxon>
    </lineage>
</organism>
<evidence type="ECO:0000255" key="1">
    <source>
        <dbReference type="PROSITE-ProRule" id="PRU00349"/>
    </source>
</evidence>
<protein>
    <recommendedName>
        <fullName>HTH-type transcriptional regulator IolR</fullName>
    </recommendedName>
</protein>
<dbReference type="EMBL" id="AB005554">
    <property type="protein sequence ID" value="BAA21608.1"/>
    <property type="molecule type" value="Genomic_DNA"/>
</dbReference>
<dbReference type="EMBL" id="AL009126">
    <property type="protein sequence ID" value="CAB16013.1"/>
    <property type="molecule type" value="Genomic_DNA"/>
</dbReference>
<dbReference type="PIR" id="C69646">
    <property type="entry name" value="C69646"/>
</dbReference>
<dbReference type="RefSeq" id="NP_391856.1">
    <property type="nucleotide sequence ID" value="NC_000964.3"/>
</dbReference>
<dbReference type="RefSeq" id="WP_003227050.1">
    <property type="nucleotide sequence ID" value="NZ_OZ025638.1"/>
</dbReference>
<dbReference type="SMR" id="P46337"/>
<dbReference type="FunCoup" id="P46337">
    <property type="interactions" value="11"/>
</dbReference>
<dbReference type="STRING" id="224308.BSU39770"/>
<dbReference type="jPOST" id="P46337"/>
<dbReference type="PaxDb" id="224308-BSU39770"/>
<dbReference type="EnsemblBacteria" id="CAB16013">
    <property type="protein sequence ID" value="CAB16013"/>
    <property type="gene ID" value="BSU_39770"/>
</dbReference>
<dbReference type="GeneID" id="86871387"/>
<dbReference type="GeneID" id="937635"/>
<dbReference type="KEGG" id="bsu:BSU39770"/>
<dbReference type="PATRIC" id="fig|224308.179.peg.4302"/>
<dbReference type="eggNOG" id="COG1349">
    <property type="taxonomic scope" value="Bacteria"/>
</dbReference>
<dbReference type="InParanoid" id="P46337"/>
<dbReference type="OrthoDB" id="9797223at2"/>
<dbReference type="PhylomeDB" id="P46337"/>
<dbReference type="BioCyc" id="BSUB:BSU39770-MONOMER"/>
<dbReference type="Proteomes" id="UP000001570">
    <property type="component" value="Chromosome"/>
</dbReference>
<dbReference type="GO" id="GO:0000987">
    <property type="term" value="F:cis-regulatory region sequence-specific DNA binding"/>
    <property type="evidence" value="ECO:0000318"/>
    <property type="project" value="GO_Central"/>
</dbReference>
<dbReference type="GO" id="GO:0098531">
    <property type="term" value="F:ligand-modulated transcription factor activity"/>
    <property type="evidence" value="ECO:0000318"/>
    <property type="project" value="GO_Central"/>
</dbReference>
<dbReference type="GO" id="GO:0006355">
    <property type="term" value="P:regulation of DNA-templated transcription"/>
    <property type="evidence" value="ECO:0000318"/>
    <property type="project" value="GO_Central"/>
</dbReference>
<dbReference type="Gene3D" id="3.40.50.1360">
    <property type="match status" value="1"/>
</dbReference>
<dbReference type="Gene3D" id="1.10.10.10">
    <property type="entry name" value="Winged helix-like DNA-binding domain superfamily/Winged helix DNA-binding domain"/>
    <property type="match status" value="1"/>
</dbReference>
<dbReference type="InterPro" id="IPR050313">
    <property type="entry name" value="Carb_Metab_HTH_regulators"/>
</dbReference>
<dbReference type="InterPro" id="IPR014036">
    <property type="entry name" value="DeoR-like_C"/>
</dbReference>
<dbReference type="InterPro" id="IPR001034">
    <property type="entry name" value="DeoR_HTH"/>
</dbReference>
<dbReference type="InterPro" id="IPR037171">
    <property type="entry name" value="NagB/RpiA_transferase-like"/>
</dbReference>
<dbReference type="InterPro" id="IPR018356">
    <property type="entry name" value="Tscrpt_reg_HTH_DeoR_CS"/>
</dbReference>
<dbReference type="InterPro" id="IPR036388">
    <property type="entry name" value="WH-like_DNA-bd_sf"/>
</dbReference>
<dbReference type="InterPro" id="IPR036390">
    <property type="entry name" value="WH_DNA-bd_sf"/>
</dbReference>
<dbReference type="PANTHER" id="PTHR30363:SF60">
    <property type="entry name" value="HTH-TYPE TRANSCRIPTIONAL REGULATOR IOLR"/>
    <property type="match status" value="1"/>
</dbReference>
<dbReference type="PANTHER" id="PTHR30363">
    <property type="entry name" value="HTH-TYPE TRANSCRIPTIONAL REGULATOR SRLR-RELATED"/>
    <property type="match status" value="1"/>
</dbReference>
<dbReference type="Pfam" id="PF00455">
    <property type="entry name" value="DeoRC"/>
    <property type="match status" value="1"/>
</dbReference>
<dbReference type="Pfam" id="PF08220">
    <property type="entry name" value="HTH_DeoR"/>
    <property type="match status" value="1"/>
</dbReference>
<dbReference type="PRINTS" id="PR00037">
    <property type="entry name" value="HTHLACR"/>
</dbReference>
<dbReference type="SMART" id="SM01134">
    <property type="entry name" value="DeoRC"/>
    <property type="match status" value="1"/>
</dbReference>
<dbReference type="SMART" id="SM00420">
    <property type="entry name" value="HTH_DEOR"/>
    <property type="match status" value="1"/>
</dbReference>
<dbReference type="SUPFAM" id="SSF100950">
    <property type="entry name" value="NagB/RpiA/CoA transferase-like"/>
    <property type="match status" value="1"/>
</dbReference>
<dbReference type="SUPFAM" id="SSF46785">
    <property type="entry name" value="Winged helix' DNA-binding domain"/>
    <property type="match status" value="1"/>
</dbReference>
<dbReference type="PROSITE" id="PS00894">
    <property type="entry name" value="HTH_DEOR_1"/>
    <property type="match status" value="1"/>
</dbReference>
<dbReference type="PROSITE" id="PS51000">
    <property type="entry name" value="HTH_DEOR_2"/>
    <property type="match status" value="1"/>
</dbReference>
<comment type="function">
    <text>Iol operon repressor.</text>
</comment>
<gene>
    <name type="primary">iolR</name>
    <name type="ordered locus">BSU39770</name>
    <name type="ORF">SS92FR</name>
</gene>
<sequence>MKLMRIQEMEEYILSHGTVSLDELCQVFNVSKNTVRRDINKLTEKGAIEKVYGGVTSIEKTALVPFENRTIQHQDEKTKIAHYASRFIEDHDLVFIDSGTTTKSILDTLDPAKNVTILTNSLDIINAASALKNINLIIIGNNYKRKTRSFVGMDDPAMLDKYNINKAFMSATGTTLTHGLTNSDLLEYEIKKRISEKAKEVYLLADHSKFGKSTLLTYAPFDRLHCIVTSQPLDDEYTQYCNEHQIGIHLA</sequence>
<keyword id="KW-0238">DNA-binding</keyword>
<keyword id="KW-1185">Reference proteome</keyword>
<keyword id="KW-0678">Repressor</keyword>
<keyword id="KW-0804">Transcription</keyword>
<keyword id="KW-0805">Transcription regulation</keyword>
<feature type="chain" id="PRO_0000050255" description="HTH-type transcriptional regulator IolR">
    <location>
        <begin position="1"/>
        <end position="251"/>
    </location>
</feature>
<feature type="domain" description="HTH deoR-type" evidence="1">
    <location>
        <begin position="1"/>
        <end position="57"/>
    </location>
</feature>
<feature type="DNA-binding region" description="H-T-H motif" evidence="1">
    <location>
        <begin position="19"/>
        <end position="38"/>
    </location>
</feature>
<proteinExistence type="predicted"/>
<reference key="1">
    <citation type="journal article" date="1995" name="DNA Res.">
        <title>Cloning and sequencing of a 36-kb region of the Bacillus subtilis genome between the gnt and iol operons.</title>
        <authorList>
            <person name="Yoshida K."/>
            <person name="Seki S."/>
            <person name="Fujimura M."/>
            <person name="Miwa Y."/>
            <person name="Fujita Y."/>
        </authorList>
    </citation>
    <scope>NUCLEOTIDE SEQUENCE [GENOMIC DNA]</scope>
    <source>
        <strain>168 / BGSC1A1</strain>
    </source>
</reference>
<reference key="2">
    <citation type="journal article" date="1997" name="J. Bacteriol.">
        <title>Organization and transcription of the myo-inositol operon, iol, of Bacillus subtilis.</title>
        <authorList>
            <person name="Yoshida K.I."/>
            <person name="Aoyama D."/>
            <person name="Ishio I."/>
            <person name="Shibayama T."/>
            <person name="Fujita Y."/>
        </authorList>
    </citation>
    <scope>NUCLEOTIDE SEQUENCE [GENOMIC DNA]</scope>
    <source>
        <strain>168 / BGSC1A1</strain>
    </source>
</reference>
<reference key="3">
    <citation type="journal article" date="1997" name="Nature">
        <title>The complete genome sequence of the Gram-positive bacterium Bacillus subtilis.</title>
        <authorList>
            <person name="Kunst F."/>
            <person name="Ogasawara N."/>
            <person name="Moszer I."/>
            <person name="Albertini A.M."/>
            <person name="Alloni G."/>
            <person name="Azevedo V."/>
            <person name="Bertero M.G."/>
            <person name="Bessieres P."/>
            <person name="Bolotin A."/>
            <person name="Borchert S."/>
            <person name="Borriss R."/>
            <person name="Boursier L."/>
            <person name="Brans A."/>
            <person name="Braun M."/>
            <person name="Brignell S.C."/>
            <person name="Bron S."/>
            <person name="Brouillet S."/>
            <person name="Bruschi C.V."/>
            <person name="Caldwell B."/>
            <person name="Capuano V."/>
            <person name="Carter N.M."/>
            <person name="Choi S.-K."/>
            <person name="Codani J.-J."/>
            <person name="Connerton I.F."/>
            <person name="Cummings N.J."/>
            <person name="Daniel R.A."/>
            <person name="Denizot F."/>
            <person name="Devine K.M."/>
            <person name="Duesterhoeft A."/>
            <person name="Ehrlich S.D."/>
            <person name="Emmerson P.T."/>
            <person name="Entian K.-D."/>
            <person name="Errington J."/>
            <person name="Fabret C."/>
            <person name="Ferrari E."/>
            <person name="Foulger D."/>
            <person name="Fritz C."/>
            <person name="Fujita M."/>
            <person name="Fujita Y."/>
            <person name="Fuma S."/>
            <person name="Galizzi A."/>
            <person name="Galleron N."/>
            <person name="Ghim S.-Y."/>
            <person name="Glaser P."/>
            <person name="Goffeau A."/>
            <person name="Golightly E.J."/>
            <person name="Grandi G."/>
            <person name="Guiseppi G."/>
            <person name="Guy B.J."/>
            <person name="Haga K."/>
            <person name="Haiech J."/>
            <person name="Harwood C.R."/>
            <person name="Henaut A."/>
            <person name="Hilbert H."/>
            <person name="Holsappel S."/>
            <person name="Hosono S."/>
            <person name="Hullo M.-F."/>
            <person name="Itaya M."/>
            <person name="Jones L.-M."/>
            <person name="Joris B."/>
            <person name="Karamata D."/>
            <person name="Kasahara Y."/>
            <person name="Klaerr-Blanchard M."/>
            <person name="Klein C."/>
            <person name="Kobayashi Y."/>
            <person name="Koetter P."/>
            <person name="Koningstein G."/>
            <person name="Krogh S."/>
            <person name="Kumano M."/>
            <person name="Kurita K."/>
            <person name="Lapidus A."/>
            <person name="Lardinois S."/>
            <person name="Lauber J."/>
            <person name="Lazarevic V."/>
            <person name="Lee S.-M."/>
            <person name="Levine A."/>
            <person name="Liu H."/>
            <person name="Masuda S."/>
            <person name="Mauel C."/>
            <person name="Medigue C."/>
            <person name="Medina N."/>
            <person name="Mellado R.P."/>
            <person name="Mizuno M."/>
            <person name="Moestl D."/>
            <person name="Nakai S."/>
            <person name="Noback M."/>
            <person name="Noone D."/>
            <person name="O'Reilly M."/>
            <person name="Ogawa K."/>
            <person name="Ogiwara A."/>
            <person name="Oudega B."/>
            <person name="Park S.-H."/>
            <person name="Parro V."/>
            <person name="Pohl T.M."/>
            <person name="Portetelle D."/>
            <person name="Porwollik S."/>
            <person name="Prescott A.M."/>
            <person name="Presecan E."/>
            <person name="Pujic P."/>
            <person name="Purnelle B."/>
            <person name="Rapoport G."/>
            <person name="Rey M."/>
            <person name="Reynolds S."/>
            <person name="Rieger M."/>
            <person name="Rivolta C."/>
            <person name="Rocha E."/>
            <person name="Roche B."/>
            <person name="Rose M."/>
            <person name="Sadaie Y."/>
            <person name="Sato T."/>
            <person name="Scanlan E."/>
            <person name="Schleich S."/>
            <person name="Schroeter R."/>
            <person name="Scoffone F."/>
            <person name="Sekiguchi J."/>
            <person name="Sekowska A."/>
            <person name="Seror S.J."/>
            <person name="Serror P."/>
            <person name="Shin B.-S."/>
            <person name="Soldo B."/>
            <person name="Sorokin A."/>
            <person name="Tacconi E."/>
            <person name="Takagi T."/>
            <person name="Takahashi H."/>
            <person name="Takemaru K."/>
            <person name="Takeuchi M."/>
            <person name="Tamakoshi A."/>
            <person name="Tanaka T."/>
            <person name="Terpstra P."/>
            <person name="Tognoni A."/>
            <person name="Tosato V."/>
            <person name="Uchiyama S."/>
            <person name="Vandenbol M."/>
            <person name="Vannier F."/>
            <person name="Vassarotti A."/>
            <person name="Viari A."/>
            <person name="Wambutt R."/>
            <person name="Wedler E."/>
            <person name="Wedler H."/>
            <person name="Weitzenegger T."/>
            <person name="Winters P."/>
            <person name="Wipat A."/>
            <person name="Yamamoto H."/>
            <person name="Yamane K."/>
            <person name="Yasumoto K."/>
            <person name="Yata K."/>
            <person name="Yoshida K."/>
            <person name="Yoshikawa H.-F."/>
            <person name="Zumstein E."/>
            <person name="Yoshikawa H."/>
            <person name="Danchin A."/>
        </authorList>
    </citation>
    <scope>NUCLEOTIDE SEQUENCE [LARGE SCALE GENOMIC DNA]</scope>
    <source>
        <strain>168</strain>
    </source>
</reference>